<reference key="1">
    <citation type="submission" date="2006-10" db="EMBL/GenBank/DDBJ databases">
        <title>Complete sequence of Syntrophobacter fumaroxidans MPOB.</title>
        <authorList>
            <consortium name="US DOE Joint Genome Institute"/>
            <person name="Copeland A."/>
            <person name="Lucas S."/>
            <person name="Lapidus A."/>
            <person name="Barry K."/>
            <person name="Detter J.C."/>
            <person name="Glavina del Rio T."/>
            <person name="Hammon N."/>
            <person name="Israni S."/>
            <person name="Pitluck S."/>
            <person name="Goltsman E.G."/>
            <person name="Martinez M."/>
            <person name="Schmutz J."/>
            <person name="Larimer F."/>
            <person name="Land M."/>
            <person name="Hauser L."/>
            <person name="Kyrpides N."/>
            <person name="Kim E."/>
            <person name="Boone D.R."/>
            <person name="Brockman F."/>
            <person name="Culley D."/>
            <person name="Ferry J."/>
            <person name="Gunsalus R."/>
            <person name="McInerney M.J."/>
            <person name="Morrison M."/>
            <person name="Plugge C."/>
            <person name="Rohlin L."/>
            <person name="Scholten J."/>
            <person name="Sieber J."/>
            <person name="Stams A.J.M."/>
            <person name="Worm P."/>
            <person name="Henstra A.M."/>
            <person name="Richardson P."/>
        </authorList>
    </citation>
    <scope>NUCLEOTIDE SEQUENCE [LARGE SCALE GENOMIC DNA]</scope>
    <source>
        <strain>DSM 10017 / MPOB</strain>
    </source>
</reference>
<gene>
    <name evidence="1" type="primary">cobT</name>
    <name type="ordered locus">Sfum_0323</name>
</gene>
<accession>A0LF21</accession>
<evidence type="ECO:0000255" key="1">
    <source>
        <dbReference type="HAMAP-Rule" id="MF_00230"/>
    </source>
</evidence>
<feature type="chain" id="PRO_1000021638" description="Nicotinate-nucleotide--dimethylbenzimidazole phosphoribosyltransferase">
    <location>
        <begin position="1"/>
        <end position="353"/>
    </location>
</feature>
<feature type="active site" description="Proton acceptor" evidence="1">
    <location>
        <position position="319"/>
    </location>
</feature>
<keyword id="KW-0169">Cobalamin biosynthesis</keyword>
<keyword id="KW-0328">Glycosyltransferase</keyword>
<keyword id="KW-1185">Reference proteome</keyword>
<keyword id="KW-0808">Transferase</keyword>
<comment type="function">
    <text evidence="1">Catalyzes the synthesis of alpha-ribazole-5'-phosphate from nicotinate mononucleotide (NAMN) and 5,6-dimethylbenzimidazole (DMB).</text>
</comment>
<comment type="catalytic activity">
    <reaction evidence="1">
        <text>5,6-dimethylbenzimidazole + nicotinate beta-D-ribonucleotide = alpha-ribazole 5'-phosphate + nicotinate + H(+)</text>
        <dbReference type="Rhea" id="RHEA:11196"/>
        <dbReference type="ChEBI" id="CHEBI:15378"/>
        <dbReference type="ChEBI" id="CHEBI:15890"/>
        <dbReference type="ChEBI" id="CHEBI:32544"/>
        <dbReference type="ChEBI" id="CHEBI:57502"/>
        <dbReference type="ChEBI" id="CHEBI:57918"/>
        <dbReference type="EC" id="2.4.2.21"/>
    </reaction>
</comment>
<comment type="pathway">
    <text evidence="1">Nucleoside biosynthesis; alpha-ribazole biosynthesis; alpha-ribazole from 5,6-dimethylbenzimidazole: step 1/2.</text>
</comment>
<comment type="similarity">
    <text evidence="1">Belongs to the CobT family.</text>
</comment>
<proteinExistence type="inferred from homology"/>
<name>COBT_SYNFM</name>
<protein>
    <recommendedName>
        <fullName evidence="1">Nicotinate-nucleotide--dimethylbenzimidazole phosphoribosyltransferase</fullName>
        <shortName evidence="1">NN:DBI PRT</shortName>
        <ecNumber evidence="1">2.4.2.21</ecNumber>
    </recommendedName>
    <alternativeName>
        <fullName evidence="1">N(1)-alpha-phosphoribosyltransferase</fullName>
    </alternativeName>
</protein>
<organism>
    <name type="scientific">Syntrophobacter fumaroxidans (strain DSM 10017 / MPOB)</name>
    <dbReference type="NCBI Taxonomy" id="335543"/>
    <lineage>
        <taxon>Bacteria</taxon>
        <taxon>Pseudomonadati</taxon>
        <taxon>Thermodesulfobacteriota</taxon>
        <taxon>Syntrophobacteria</taxon>
        <taxon>Syntrophobacterales</taxon>
        <taxon>Syntrophobacteraceae</taxon>
        <taxon>Syntrophobacter</taxon>
    </lineage>
</organism>
<dbReference type="EC" id="2.4.2.21" evidence="1"/>
<dbReference type="EMBL" id="CP000478">
    <property type="protein sequence ID" value="ABK16023.1"/>
    <property type="molecule type" value="Genomic_DNA"/>
</dbReference>
<dbReference type="RefSeq" id="WP_011697196.1">
    <property type="nucleotide sequence ID" value="NC_008554.1"/>
</dbReference>
<dbReference type="SMR" id="A0LF21"/>
<dbReference type="FunCoup" id="A0LF21">
    <property type="interactions" value="102"/>
</dbReference>
<dbReference type="STRING" id="335543.Sfum_0323"/>
<dbReference type="KEGG" id="sfu:Sfum_0323"/>
<dbReference type="eggNOG" id="COG2038">
    <property type="taxonomic scope" value="Bacteria"/>
</dbReference>
<dbReference type="HOGENOM" id="CLU_002982_0_0_7"/>
<dbReference type="InParanoid" id="A0LF21"/>
<dbReference type="OrthoDB" id="9781491at2"/>
<dbReference type="UniPathway" id="UPA00061">
    <property type="reaction ID" value="UER00516"/>
</dbReference>
<dbReference type="Proteomes" id="UP000001784">
    <property type="component" value="Chromosome"/>
</dbReference>
<dbReference type="GO" id="GO:0008939">
    <property type="term" value="F:nicotinate-nucleotide-dimethylbenzimidazole phosphoribosyltransferase activity"/>
    <property type="evidence" value="ECO:0007669"/>
    <property type="project" value="UniProtKB-UniRule"/>
</dbReference>
<dbReference type="GO" id="GO:0009236">
    <property type="term" value="P:cobalamin biosynthetic process"/>
    <property type="evidence" value="ECO:0007669"/>
    <property type="project" value="UniProtKB-KW"/>
</dbReference>
<dbReference type="CDD" id="cd02439">
    <property type="entry name" value="DMB-PRT_CobT"/>
    <property type="match status" value="1"/>
</dbReference>
<dbReference type="FunFam" id="3.40.50.10210:FF:000001">
    <property type="entry name" value="Nicotinate-nucleotide--dimethylbenzimidazole phosphoribosyltransferase"/>
    <property type="match status" value="1"/>
</dbReference>
<dbReference type="Gene3D" id="1.10.1610.10">
    <property type="match status" value="1"/>
</dbReference>
<dbReference type="Gene3D" id="3.40.50.10210">
    <property type="match status" value="1"/>
</dbReference>
<dbReference type="HAMAP" id="MF_00230">
    <property type="entry name" value="CobT"/>
    <property type="match status" value="1"/>
</dbReference>
<dbReference type="InterPro" id="IPR003200">
    <property type="entry name" value="Nict_dMeBzImd_PRibTrfase"/>
</dbReference>
<dbReference type="InterPro" id="IPR017846">
    <property type="entry name" value="Nict_dMeBzImd_PRibTrfase_bact"/>
</dbReference>
<dbReference type="InterPro" id="IPR023195">
    <property type="entry name" value="Nict_dMeBzImd_PRibTrfase_N"/>
</dbReference>
<dbReference type="InterPro" id="IPR036087">
    <property type="entry name" value="Nict_dMeBzImd_PRibTrfase_sf"/>
</dbReference>
<dbReference type="NCBIfam" id="TIGR03160">
    <property type="entry name" value="cobT_DBIPRT"/>
    <property type="match status" value="1"/>
</dbReference>
<dbReference type="NCBIfam" id="NF000996">
    <property type="entry name" value="PRK00105.1"/>
    <property type="match status" value="1"/>
</dbReference>
<dbReference type="PANTHER" id="PTHR43463">
    <property type="entry name" value="NICOTINATE-NUCLEOTIDE--DIMETHYLBENZIMIDAZOLE PHOSPHORIBOSYLTRANSFERASE"/>
    <property type="match status" value="1"/>
</dbReference>
<dbReference type="PANTHER" id="PTHR43463:SF1">
    <property type="entry name" value="NICOTINATE-NUCLEOTIDE--DIMETHYLBENZIMIDAZOLE PHOSPHORIBOSYLTRANSFERASE"/>
    <property type="match status" value="1"/>
</dbReference>
<dbReference type="Pfam" id="PF02277">
    <property type="entry name" value="DBI_PRT"/>
    <property type="match status" value="1"/>
</dbReference>
<dbReference type="SUPFAM" id="SSF52733">
    <property type="entry name" value="Nicotinate mononucleotide:5,6-dimethylbenzimidazole phosphoribosyltransferase (CobT)"/>
    <property type="match status" value="1"/>
</dbReference>
<sequence>MEKLDRLLERIEPASKDWEAKAWERLHAQIRPRDSLGRLEVIAARLAAIKRSLTPAVGRKIIFTMAGDHGVAAEGVSAYPQEVTAQMVGSFVRGWASINILAVHCGAAVRVVDCGVASDLPPDWPVLRRKLGKGTANIAVGPAMSREVAVRGLTIGAEIVQDAHLKEGYLLFGTGDMGIGNTTPSTAIIAALGGKPVRDLTGRGTGIDDVAFERKVRVIERALAVNRPDPNDPLGVLAGVGGFEIAALGGAVLGAAALRVPIICDGFIATAGALVACRLAPKAADYLFVSHRSREVGHTAMVDMLGMRPILDLDMRLGEGTGSALAMNIVEAAAKVLVECKTFEEAGVTDTGH</sequence>